<proteinExistence type="inferred from homology"/>
<comment type="function">
    <text evidence="1">Two distinct, membrane-bound, FAD-containing enzymes are responsible for the catalysis of fumarate and succinate interconversion; fumarate reductase is used in anaerobic growth, and succinate dehydrogenase is used in aerobic growth. Anchors the catalytic components of the fumarate reductase complex to the cell inner membrane, binds quinones.</text>
</comment>
<comment type="subunit">
    <text evidence="1">Part of an enzyme complex containing four subunits: a flavoprotein (FrdA), an iron-sulfur protein (FrdB), and two hydrophobic anchor proteins (FrdC and FrdD).</text>
</comment>
<comment type="subcellular location">
    <subcellularLocation>
        <location evidence="1">Cell inner membrane</location>
        <topology evidence="1">Multi-pass membrane protein</topology>
    </subcellularLocation>
</comment>
<comment type="similarity">
    <text evidence="1">Belongs to the FrdD family.</text>
</comment>
<reference key="1">
    <citation type="journal article" date="2009" name="PLoS Genet.">
        <title>Organised genome dynamics in the Escherichia coli species results in highly diverse adaptive paths.</title>
        <authorList>
            <person name="Touchon M."/>
            <person name="Hoede C."/>
            <person name="Tenaillon O."/>
            <person name="Barbe V."/>
            <person name="Baeriswyl S."/>
            <person name="Bidet P."/>
            <person name="Bingen E."/>
            <person name="Bonacorsi S."/>
            <person name="Bouchier C."/>
            <person name="Bouvet O."/>
            <person name="Calteau A."/>
            <person name="Chiapello H."/>
            <person name="Clermont O."/>
            <person name="Cruveiller S."/>
            <person name="Danchin A."/>
            <person name="Diard M."/>
            <person name="Dossat C."/>
            <person name="Karoui M.E."/>
            <person name="Frapy E."/>
            <person name="Garry L."/>
            <person name="Ghigo J.M."/>
            <person name="Gilles A.M."/>
            <person name="Johnson J."/>
            <person name="Le Bouguenec C."/>
            <person name="Lescat M."/>
            <person name="Mangenot S."/>
            <person name="Martinez-Jehanne V."/>
            <person name="Matic I."/>
            <person name="Nassif X."/>
            <person name="Oztas S."/>
            <person name="Petit M.A."/>
            <person name="Pichon C."/>
            <person name="Rouy Z."/>
            <person name="Ruf C.S."/>
            <person name="Schneider D."/>
            <person name="Tourret J."/>
            <person name="Vacherie B."/>
            <person name="Vallenet D."/>
            <person name="Medigue C."/>
            <person name="Rocha E.P.C."/>
            <person name="Denamur E."/>
        </authorList>
    </citation>
    <scope>NUCLEOTIDE SEQUENCE [LARGE SCALE GENOMIC DNA]</scope>
    <source>
        <strain>ATCC 35469 / DSM 13698 / BCRC 15582 / CCUG 18766 / IAM 14443 / JCM 21226 / LMG 7866 / NBRC 102419 / NCTC 12128 / CDC 0568-73</strain>
    </source>
</reference>
<protein>
    <recommendedName>
        <fullName evidence="1">Fumarate reductase subunit D</fullName>
    </recommendedName>
    <alternativeName>
        <fullName evidence="1">Fumarate reductase 13 kDa hydrophobic protein</fullName>
    </alternativeName>
    <alternativeName>
        <fullName evidence="1">Quinol-fumarate reductase subunit D</fullName>
        <shortName evidence="1">QFR subunit D</shortName>
    </alternativeName>
</protein>
<accession>B7LLT5</accession>
<gene>
    <name evidence="1" type="primary">frdD</name>
    <name type="ordered locus">EFER_4205</name>
</gene>
<evidence type="ECO:0000255" key="1">
    <source>
        <dbReference type="HAMAP-Rule" id="MF_00709"/>
    </source>
</evidence>
<feature type="chain" id="PRO_1000132404" description="Fumarate reductase subunit D">
    <location>
        <begin position="1"/>
        <end position="119"/>
    </location>
</feature>
<feature type="transmembrane region" description="Helical" evidence="1">
    <location>
        <begin position="26"/>
        <end position="46"/>
    </location>
</feature>
<feature type="transmembrane region" description="Helical" evidence="1">
    <location>
        <begin position="55"/>
        <end position="75"/>
    </location>
</feature>
<feature type="transmembrane region" description="Helical" evidence="1">
    <location>
        <begin position="99"/>
        <end position="119"/>
    </location>
</feature>
<organism>
    <name type="scientific">Escherichia fergusonii (strain ATCC 35469 / DSM 13698 / CCUG 18766 / IAM 14443 / JCM 21226 / LMG 7866 / NBRC 102419 / NCTC 12128 / CDC 0568-73)</name>
    <dbReference type="NCBI Taxonomy" id="585054"/>
    <lineage>
        <taxon>Bacteria</taxon>
        <taxon>Pseudomonadati</taxon>
        <taxon>Pseudomonadota</taxon>
        <taxon>Gammaproteobacteria</taxon>
        <taxon>Enterobacterales</taxon>
        <taxon>Enterobacteriaceae</taxon>
        <taxon>Escherichia</taxon>
    </lineage>
</organism>
<name>FRDD_ESCF3</name>
<sequence>MINPNPKRSDEPVFWGLFGAGGMWSAIIAPVMILLVGILLPLGLFPGDALSYERVLAFAQSFIGRVFLFLMIVLPLWCGLHRMHHAMHDLKIHVPAGKWVFYGLAAILTVVTLIGVVTI</sequence>
<dbReference type="EMBL" id="CU928158">
    <property type="protein sequence ID" value="CAQ91625.1"/>
    <property type="molecule type" value="Genomic_DNA"/>
</dbReference>
<dbReference type="RefSeq" id="WP_000609663.1">
    <property type="nucleotide sequence ID" value="NC_011740.1"/>
</dbReference>
<dbReference type="SMR" id="B7LLT5"/>
<dbReference type="GeneID" id="75169672"/>
<dbReference type="KEGG" id="efe:EFER_4205"/>
<dbReference type="HOGENOM" id="CLU_168367_0_0_6"/>
<dbReference type="OrthoDB" id="9804636at2"/>
<dbReference type="Proteomes" id="UP000000745">
    <property type="component" value="Chromosome"/>
</dbReference>
<dbReference type="GO" id="GO:0045283">
    <property type="term" value="C:fumarate reductase complex"/>
    <property type="evidence" value="ECO:0007669"/>
    <property type="project" value="UniProtKB-UniRule"/>
</dbReference>
<dbReference type="GO" id="GO:0005886">
    <property type="term" value="C:plasma membrane"/>
    <property type="evidence" value="ECO:0007669"/>
    <property type="project" value="UniProtKB-SubCell"/>
</dbReference>
<dbReference type="GO" id="GO:0000104">
    <property type="term" value="F:succinate dehydrogenase activity"/>
    <property type="evidence" value="ECO:0007669"/>
    <property type="project" value="UniProtKB-UniRule"/>
</dbReference>
<dbReference type="GO" id="GO:0006106">
    <property type="term" value="P:fumarate metabolic process"/>
    <property type="evidence" value="ECO:0007669"/>
    <property type="project" value="InterPro"/>
</dbReference>
<dbReference type="CDD" id="cd00547">
    <property type="entry name" value="QFR_TypeD_subunitD"/>
    <property type="match status" value="1"/>
</dbReference>
<dbReference type="FunFam" id="1.20.1300.10:FF:000002">
    <property type="entry name" value="Fumarate reductase subunit D"/>
    <property type="match status" value="1"/>
</dbReference>
<dbReference type="Gene3D" id="1.20.1300.10">
    <property type="entry name" value="Fumarate reductase/succinate dehydrogenase, transmembrane subunit"/>
    <property type="match status" value="1"/>
</dbReference>
<dbReference type="HAMAP" id="MF_00709">
    <property type="entry name" value="Fumarate_red_D"/>
    <property type="match status" value="1"/>
</dbReference>
<dbReference type="InterPro" id="IPR003418">
    <property type="entry name" value="Fumarate_red_D"/>
</dbReference>
<dbReference type="InterPro" id="IPR034804">
    <property type="entry name" value="SQR/QFR_C/D"/>
</dbReference>
<dbReference type="NCBIfam" id="NF003977">
    <property type="entry name" value="PRK05470.1-1"/>
    <property type="match status" value="1"/>
</dbReference>
<dbReference type="Pfam" id="PF02313">
    <property type="entry name" value="Fumarate_red_D"/>
    <property type="match status" value="1"/>
</dbReference>
<dbReference type="PIRSF" id="PIRSF000179">
    <property type="entry name" value="FrdD"/>
    <property type="match status" value="1"/>
</dbReference>
<dbReference type="SUPFAM" id="SSF81343">
    <property type="entry name" value="Fumarate reductase respiratory complex transmembrane subunits"/>
    <property type="match status" value="1"/>
</dbReference>
<keyword id="KW-0997">Cell inner membrane</keyword>
<keyword id="KW-1003">Cell membrane</keyword>
<keyword id="KW-0472">Membrane</keyword>
<keyword id="KW-0812">Transmembrane</keyword>
<keyword id="KW-1133">Transmembrane helix</keyword>